<sequence length="103" mass="11482">MYAVFQSGGKQHRVEAGHTVRLEKLEVATGETIEFDQVLLVADGETVHVGAPLVEGGKVVAEVISHGRADKVTIVKFRRRKHHDKKMGHRQWFTEVKITAINA</sequence>
<accession>B0TUI0</accession>
<organism>
    <name type="scientific">Shewanella halifaxensis (strain HAW-EB4)</name>
    <dbReference type="NCBI Taxonomy" id="458817"/>
    <lineage>
        <taxon>Bacteria</taxon>
        <taxon>Pseudomonadati</taxon>
        <taxon>Pseudomonadota</taxon>
        <taxon>Gammaproteobacteria</taxon>
        <taxon>Alteromonadales</taxon>
        <taxon>Shewanellaceae</taxon>
        <taxon>Shewanella</taxon>
    </lineage>
</organism>
<gene>
    <name evidence="1" type="primary">rplU</name>
    <name type="ordered locus">Shal_0905</name>
</gene>
<proteinExistence type="inferred from homology"/>
<name>RL21_SHEHH</name>
<comment type="function">
    <text evidence="1">This protein binds to 23S rRNA in the presence of protein L20.</text>
</comment>
<comment type="subunit">
    <text evidence="1">Part of the 50S ribosomal subunit. Contacts protein L20.</text>
</comment>
<comment type="similarity">
    <text evidence="1">Belongs to the bacterial ribosomal protein bL21 family.</text>
</comment>
<reference key="1">
    <citation type="submission" date="2008-01" db="EMBL/GenBank/DDBJ databases">
        <title>Complete sequence of Shewanella halifaxensis HAW-EB4.</title>
        <authorList>
            <consortium name="US DOE Joint Genome Institute"/>
            <person name="Copeland A."/>
            <person name="Lucas S."/>
            <person name="Lapidus A."/>
            <person name="Glavina del Rio T."/>
            <person name="Dalin E."/>
            <person name="Tice H."/>
            <person name="Bruce D."/>
            <person name="Goodwin L."/>
            <person name="Pitluck S."/>
            <person name="Sims D."/>
            <person name="Brettin T."/>
            <person name="Detter J.C."/>
            <person name="Han C."/>
            <person name="Kuske C.R."/>
            <person name="Schmutz J."/>
            <person name="Larimer F."/>
            <person name="Land M."/>
            <person name="Hauser L."/>
            <person name="Kyrpides N."/>
            <person name="Kim E."/>
            <person name="Zhao J.-S."/>
            <person name="Richardson P."/>
        </authorList>
    </citation>
    <scope>NUCLEOTIDE SEQUENCE [LARGE SCALE GENOMIC DNA]</scope>
    <source>
        <strain>HAW-EB4</strain>
    </source>
</reference>
<feature type="chain" id="PRO_1000086999" description="Large ribosomal subunit protein bL21">
    <location>
        <begin position="1"/>
        <end position="103"/>
    </location>
</feature>
<dbReference type="EMBL" id="CP000931">
    <property type="protein sequence ID" value="ABZ75480.1"/>
    <property type="molecule type" value="Genomic_DNA"/>
</dbReference>
<dbReference type="RefSeq" id="WP_012154113.1">
    <property type="nucleotide sequence ID" value="NC_010334.1"/>
</dbReference>
<dbReference type="SMR" id="B0TUI0"/>
<dbReference type="STRING" id="458817.Shal_0905"/>
<dbReference type="KEGG" id="shl:Shal_0905"/>
<dbReference type="eggNOG" id="COG0261">
    <property type="taxonomic scope" value="Bacteria"/>
</dbReference>
<dbReference type="HOGENOM" id="CLU_061463_3_3_6"/>
<dbReference type="OrthoDB" id="9813334at2"/>
<dbReference type="Proteomes" id="UP000001317">
    <property type="component" value="Chromosome"/>
</dbReference>
<dbReference type="GO" id="GO:0005737">
    <property type="term" value="C:cytoplasm"/>
    <property type="evidence" value="ECO:0007669"/>
    <property type="project" value="UniProtKB-ARBA"/>
</dbReference>
<dbReference type="GO" id="GO:1990904">
    <property type="term" value="C:ribonucleoprotein complex"/>
    <property type="evidence" value="ECO:0007669"/>
    <property type="project" value="UniProtKB-KW"/>
</dbReference>
<dbReference type="GO" id="GO:0005840">
    <property type="term" value="C:ribosome"/>
    <property type="evidence" value="ECO:0007669"/>
    <property type="project" value="UniProtKB-KW"/>
</dbReference>
<dbReference type="GO" id="GO:0019843">
    <property type="term" value="F:rRNA binding"/>
    <property type="evidence" value="ECO:0007669"/>
    <property type="project" value="UniProtKB-UniRule"/>
</dbReference>
<dbReference type="GO" id="GO:0003735">
    <property type="term" value="F:structural constituent of ribosome"/>
    <property type="evidence" value="ECO:0007669"/>
    <property type="project" value="InterPro"/>
</dbReference>
<dbReference type="GO" id="GO:0006412">
    <property type="term" value="P:translation"/>
    <property type="evidence" value="ECO:0007669"/>
    <property type="project" value="UniProtKB-UniRule"/>
</dbReference>
<dbReference type="HAMAP" id="MF_01363">
    <property type="entry name" value="Ribosomal_bL21"/>
    <property type="match status" value="1"/>
</dbReference>
<dbReference type="InterPro" id="IPR028909">
    <property type="entry name" value="bL21-like"/>
</dbReference>
<dbReference type="InterPro" id="IPR036164">
    <property type="entry name" value="bL21-like_sf"/>
</dbReference>
<dbReference type="InterPro" id="IPR001787">
    <property type="entry name" value="Ribosomal_bL21"/>
</dbReference>
<dbReference type="InterPro" id="IPR018258">
    <property type="entry name" value="Ribosomal_bL21_CS"/>
</dbReference>
<dbReference type="NCBIfam" id="TIGR00061">
    <property type="entry name" value="L21"/>
    <property type="match status" value="1"/>
</dbReference>
<dbReference type="PANTHER" id="PTHR21349">
    <property type="entry name" value="50S RIBOSOMAL PROTEIN L21"/>
    <property type="match status" value="1"/>
</dbReference>
<dbReference type="PANTHER" id="PTHR21349:SF0">
    <property type="entry name" value="LARGE RIBOSOMAL SUBUNIT PROTEIN BL21M"/>
    <property type="match status" value="1"/>
</dbReference>
<dbReference type="Pfam" id="PF00829">
    <property type="entry name" value="Ribosomal_L21p"/>
    <property type="match status" value="1"/>
</dbReference>
<dbReference type="SUPFAM" id="SSF141091">
    <property type="entry name" value="L21p-like"/>
    <property type="match status" value="1"/>
</dbReference>
<dbReference type="PROSITE" id="PS01169">
    <property type="entry name" value="RIBOSOMAL_L21"/>
    <property type="match status" value="1"/>
</dbReference>
<protein>
    <recommendedName>
        <fullName evidence="1">Large ribosomal subunit protein bL21</fullName>
    </recommendedName>
    <alternativeName>
        <fullName evidence="2">50S ribosomal protein L21</fullName>
    </alternativeName>
</protein>
<keyword id="KW-0687">Ribonucleoprotein</keyword>
<keyword id="KW-0689">Ribosomal protein</keyword>
<keyword id="KW-0694">RNA-binding</keyword>
<keyword id="KW-0699">rRNA-binding</keyword>
<evidence type="ECO:0000255" key="1">
    <source>
        <dbReference type="HAMAP-Rule" id="MF_01363"/>
    </source>
</evidence>
<evidence type="ECO:0000305" key="2"/>